<evidence type="ECO:0000255" key="1"/>
<evidence type="ECO:0000255" key="2">
    <source>
        <dbReference type="PROSITE-ProRule" id="PRU00040"/>
    </source>
</evidence>
<evidence type="ECO:0000269" key="3">
    <source>
    </source>
</evidence>
<evidence type="ECO:0000269" key="4">
    <source>
    </source>
</evidence>
<evidence type="ECO:0000269" key="5">
    <source>
    </source>
</evidence>
<evidence type="ECO:0000269" key="6">
    <source>
    </source>
</evidence>
<evidence type="ECO:0000269" key="7">
    <source>
    </source>
</evidence>
<evidence type="ECO:0000303" key="8">
    <source>
    </source>
</evidence>
<evidence type="ECO:0007744" key="9">
    <source>
    </source>
</evidence>
<reference key="1">
    <citation type="journal article" date="2004" name="J. Biol. Chem.">
        <title>Characterization of a novel C-type lectin-like gene, LSECtin: demonstration of carbohydrate binding and expression in sinusoidal endothelial cells of liver and lymph node.</title>
        <authorList>
            <person name="Liu W."/>
            <person name="Tang L."/>
            <person name="Zhang G."/>
            <person name="Wei H."/>
            <person name="Cui Y."/>
            <person name="Guo L."/>
            <person name="Gou Z."/>
            <person name="Chen X."/>
            <person name="Jiang D."/>
            <person name="Zhu Y."/>
            <person name="Kang G."/>
            <person name="He F."/>
        </authorList>
    </citation>
    <scope>NUCLEOTIDE SEQUENCE [MRNA]</scope>
    <scope>FUNCTION</scope>
    <scope>SUBCELLULAR LOCATION</scope>
    <scope>TISSUE SPECIFICITY</scope>
    <source>
        <tissue>Fetal liver</tissue>
    </source>
</reference>
<reference key="2">
    <citation type="journal article" date="2003" name="Genome Res.">
        <title>The secreted protein discovery initiative (SPDI), a large-scale effort to identify novel human secreted and transmembrane proteins: a bioinformatics assessment.</title>
        <authorList>
            <person name="Clark H.F."/>
            <person name="Gurney A.L."/>
            <person name="Abaya E."/>
            <person name="Baker K."/>
            <person name="Baldwin D.T."/>
            <person name="Brush J."/>
            <person name="Chen J."/>
            <person name="Chow B."/>
            <person name="Chui C."/>
            <person name="Crowley C."/>
            <person name="Currell B."/>
            <person name="Deuel B."/>
            <person name="Dowd P."/>
            <person name="Eaton D."/>
            <person name="Foster J.S."/>
            <person name="Grimaldi C."/>
            <person name="Gu Q."/>
            <person name="Hass P.E."/>
            <person name="Heldens S."/>
            <person name="Huang A."/>
            <person name="Kim H.S."/>
            <person name="Klimowski L."/>
            <person name="Jin Y."/>
            <person name="Johnson S."/>
            <person name="Lee J."/>
            <person name="Lewis L."/>
            <person name="Liao D."/>
            <person name="Mark M.R."/>
            <person name="Robbie E."/>
            <person name="Sanchez C."/>
            <person name="Schoenfeld J."/>
            <person name="Seshagiri S."/>
            <person name="Simmons L."/>
            <person name="Singh J."/>
            <person name="Smith V."/>
            <person name="Stinson J."/>
            <person name="Vagts A."/>
            <person name="Vandlen R.L."/>
            <person name="Watanabe C."/>
            <person name="Wieand D."/>
            <person name="Woods K."/>
            <person name="Xie M.-H."/>
            <person name="Yansura D.G."/>
            <person name="Yi S."/>
            <person name="Yu G."/>
            <person name="Yuan J."/>
            <person name="Zhang M."/>
            <person name="Zhang Z."/>
            <person name="Goddard A.D."/>
            <person name="Wood W.I."/>
            <person name="Godowski P.J."/>
            <person name="Gray A.M."/>
        </authorList>
    </citation>
    <scope>NUCLEOTIDE SEQUENCE [LARGE SCALE MRNA]</scope>
</reference>
<reference key="3">
    <citation type="journal article" date="2004" name="Genome Res.">
        <title>The status, quality, and expansion of the NIH full-length cDNA project: the Mammalian Gene Collection (MGC).</title>
        <authorList>
            <consortium name="The MGC Project Team"/>
        </authorList>
    </citation>
    <scope>NUCLEOTIDE SEQUENCE [LARGE SCALE MRNA]</scope>
    <source>
        <tissue>Liver</tissue>
    </source>
</reference>
<reference key="4">
    <citation type="journal article" date="2005" name="Virology">
        <title>LSECtin interacts with filovirus glycoproteins and the spike protein of SARS coronavirus.</title>
        <authorList>
            <person name="Gramberg T."/>
            <person name="Hofmann H."/>
            <person name="Moeller P."/>
            <person name="Lalor P.F."/>
            <person name="Marzi A."/>
            <person name="Geier M."/>
            <person name="Krumbiegel M."/>
            <person name="Winkler T."/>
            <person name="Kirchhoff F."/>
            <person name="Adams D.H."/>
            <person name="Becker S."/>
            <person name="Muench J."/>
            <person name="Poehlmann S."/>
        </authorList>
    </citation>
    <scope>FUNCTION (MICROBIAL INFECTION)</scope>
    <scope>INTERACTION WITH EBOLAVIRUS GLYCOPROTEIN AND SARS-COV SPIKE GLYCOPROTEIN (MICROBIAL INFECTION)</scope>
</reference>
<reference key="5">
    <citation type="journal article" date="2012" name="J. Virol.">
        <title>Identification of cell surface molecules involved in dystroglycan-independent Lassa virus cell entry.</title>
        <authorList>
            <person name="Shimojima M."/>
            <person name="Stroher U."/>
            <person name="Ebihara H."/>
            <person name="Feldmann H."/>
            <person name="Kawaoka Y."/>
        </authorList>
    </citation>
    <scope>FUNCTION (MICROBIAL INFECTION)</scope>
    <scope>INTERACTION WITH LASSA VIRUS GLYCOPROTEIN (MICROBIAL INFECTION)</scope>
</reference>
<reference key="6">
    <citation type="journal article" date="2012" name="J. Vet. Med. Sci.">
        <title>Cell surface molecules involved in infection mediated by lymphocytic choriomeningitis virus glycoprotein.</title>
        <authorList>
            <person name="Shimojima M."/>
            <person name="Kawaoka Y."/>
        </authorList>
    </citation>
    <scope>FUNCTION (MICROBIAL INFECTION)</scope>
    <scope>INTERACTION WITH LYMPHOCYTIC CHORIOMENINGITIS VIRUS GLYCOPROTEIN (MICROBIAL INFECTION)</scope>
</reference>
<reference key="7">
    <citation type="journal article" date="2014" name="Arch. Virol.">
        <title>Distinct usage of three C-type lectins by Japanese encephalitis virus: DC-SIGN, DC-SIGNR, and LSECtin.</title>
        <authorList>
            <person name="Shimojima M."/>
            <person name="Takenouchi A."/>
            <person name="Shimoda H."/>
            <person name="Kimura N."/>
            <person name="Maeda K."/>
        </authorList>
    </citation>
    <scope>FUNCTION (MICROBIAL INFECTION)</scope>
    <scope>INTERACTION WITH JAPANESE ENCEPHALITIS VIRUS ENVELOPE PROTEIN E (MICROBIAL INFECTION)</scope>
</reference>
<reference key="8">
    <citation type="journal article" date="2014" name="J. Proteomics">
        <title>An enzyme assisted RP-RPLC approach for in-depth analysis of human liver phosphoproteome.</title>
        <authorList>
            <person name="Bian Y."/>
            <person name="Song C."/>
            <person name="Cheng K."/>
            <person name="Dong M."/>
            <person name="Wang F."/>
            <person name="Huang J."/>
            <person name="Sun D."/>
            <person name="Wang L."/>
            <person name="Ye M."/>
            <person name="Zou H."/>
        </authorList>
    </citation>
    <scope>PHOSPHORYLATION [LARGE SCALE ANALYSIS] AT SER-12</scope>
    <scope>IDENTIFICATION BY MASS SPECTROMETRY [LARGE SCALE ANALYSIS]</scope>
    <source>
        <tissue>Liver</tissue>
    </source>
</reference>
<organism>
    <name type="scientific">Homo sapiens</name>
    <name type="common">Human</name>
    <dbReference type="NCBI Taxonomy" id="9606"/>
    <lineage>
        <taxon>Eukaryota</taxon>
        <taxon>Metazoa</taxon>
        <taxon>Chordata</taxon>
        <taxon>Craniata</taxon>
        <taxon>Vertebrata</taxon>
        <taxon>Euteleostomi</taxon>
        <taxon>Mammalia</taxon>
        <taxon>Eutheria</taxon>
        <taxon>Euarchontoglires</taxon>
        <taxon>Primates</taxon>
        <taxon>Haplorrhini</taxon>
        <taxon>Catarrhini</taxon>
        <taxon>Hominidae</taxon>
        <taxon>Homo</taxon>
    </lineage>
</organism>
<dbReference type="EMBL" id="AY358431">
    <property type="protein sequence ID" value="AAQ88797.1"/>
    <property type="molecule type" value="mRNA"/>
</dbReference>
<dbReference type="EMBL" id="BC093691">
    <property type="protein sequence ID" value="AAH93691.1"/>
    <property type="molecule type" value="mRNA"/>
</dbReference>
<dbReference type="EMBL" id="BC093693">
    <property type="protein sequence ID" value="AAH93693.1"/>
    <property type="molecule type" value="mRNA"/>
</dbReference>
<dbReference type="CCDS" id="CCDS12185.1"/>
<dbReference type="RefSeq" id="NP_940894.1">
    <property type="nucleotide sequence ID" value="NM_198492.4"/>
</dbReference>
<dbReference type="SMR" id="Q6UXB4"/>
<dbReference type="BioGRID" id="130876">
    <property type="interactions" value="46"/>
</dbReference>
<dbReference type="FunCoup" id="Q6UXB4">
    <property type="interactions" value="236"/>
</dbReference>
<dbReference type="IntAct" id="Q6UXB4">
    <property type="interactions" value="82"/>
</dbReference>
<dbReference type="MINT" id="Q6UXB4"/>
<dbReference type="STRING" id="9606.ENSP00000327599"/>
<dbReference type="GlyCosmos" id="Q6UXB4">
    <property type="glycosylation" value="2 sites, No reported glycans"/>
</dbReference>
<dbReference type="GlyGen" id="Q6UXB4">
    <property type="glycosylation" value="2 sites"/>
</dbReference>
<dbReference type="iPTMnet" id="Q6UXB4"/>
<dbReference type="PhosphoSitePlus" id="Q6UXB4"/>
<dbReference type="BioMuta" id="CLEC4G"/>
<dbReference type="DMDM" id="74738199"/>
<dbReference type="MassIVE" id="Q6UXB4"/>
<dbReference type="PaxDb" id="9606-ENSP00000327599"/>
<dbReference type="PeptideAtlas" id="Q6UXB4"/>
<dbReference type="ProteomicsDB" id="67585"/>
<dbReference type="Antibodypedia" id="2674">
    <property type="antibodies" value="100 antibodies from 22 providers"/>
</dbReference>
<dbReference type="DNASU" id="339390"/>
<dbReference type="Ensembl" id="ENST00000328853.11">
    <property type="protein sequence ID" value="ENSP00000327599.4"/>
    <property type="gene ID" value="ENSG00000182566.15"/>
</dbReference>
<dbReference type="GeneID" id="339390"/>
<dbReference type="KEGG" id="hsa:339390"/>
<dbReference type="MANE-Select" id="ENST00000328853.11">
    <property type="protein sequence ID" value="ENSP00000327599.4"/>
    <property type="RefSeq nucleotide sequence ID" value="NM_198492.4"/>
    <property type="RefSeq protein sequence ID" value="NP_940894.1"/>
</dbReference>
<dbReference type="UCSC" id="uc002mhp.4">
    <property type="organism name" value="human"/>
</dbReference>
<dbReference type="AGR" id="HGNC:24591"/>
<dbReference type="CTD" id="339390"/>
<dbReference type="DisGeNET" id="339390"/>
<dbReference type="GeneCards" id="CLEC4G"/>
<dbReference type="HGNC" id="HGNC:24591">
    <property type="gene designation" value="CLEC4G"/>
</dbReference>
<dbReference type="HPA" id="ENSG00000182566">
    <property type="expression patterns" value="Tissue enhanced (brain, liver)"/>
</dbReference>
<dbReference type="MIM" id="616256">
    <property type="type" value="gene"/>
</dbReference>
<dbReference type="neXtProt" id="NX_Q6UXB4"/>
<dbReference type="OpenTargets" id="ENSG00000182566"/>
<dbReference type="PharmGKB" id="PA142672104"/>
<dbReference type="VEuPathDB" id="HostDB:ENSG00000182566"/>
<dbReference type="eggNOG" id="KOG4297">
    <property type="taxonomic scope" value="Eukaryota"/>
</dbReference>
<dbReference type="GeneTree" id="ENSGT00940000161836"/>
<dbReference type="HOGENOM" id="CLU_049894_7_2_1"/>
<dbReference type="InParanoid" id="Q6UXB4"/>
<dbReference type="OMA" id="GQEDCVM"/>
<dbReference type="OrthoDB" id="6133475at2759"/>
<dbReference type="PAN-GO" id="Q6UXB4">
    <property type="GO annotations" value="3 GO annotations based on evolutionary models"/>
</dbReference>
<dbReference type="PhylomeDB" id="Q6UXB4"/>
<dbReference type="TreeFam" id="TF333341"/>
<dbReference type="PathwayCommons" id="Q6UXB4"/>
<dbReference type="Reactome" id="R-HSA-198933">
    <property type="pathway name" value="Immunoregulatory interactions between a Lymphoid and a non-Lymphoid cell"/>
</dbReference>
<dbReference type="SignaLink" id="Q6UXB4"/>
<dbReference type="BioGRID-ORCS" id="339390">
    <property type="hits" value="9 hits in 1138 CRISPR screens"/>
</dbReference>
<dbReference type="GenomeRNAi" id="339390"/>
<dbReference type="Pharos" id="Q6UXB4">
    <property type="development level" value="Tbio"/>
</dbReference>
<dbReference type="PRO" id="PR:Q6UXB4"/>
<dbReference type="Proteomes" id="UP000005640">
    <property type="component" value="Chromosome 19"/>
</dbReference>
<dbReference type="RNAct" id="Q6UXB4">
    <property type="molecule type" value="protein"/>
</dbReference>
<dbReference type="Bgee" id="ENSG00000182566">
    <property type="expression patterns" value="Expressed in right lobe of liver and 92 other cell types or tissues"/>
</dbReference>
<dbReference type="ExpressionAtlas" id="Q6UXB4">
    <property type="expression patterns" value="baseline and differential"/>
</dbReference>
<dbReference type="GO" id="GO:0009897">
    <property type="term" value="C:external side of plasma membrane"/>
    <property type="evidence" value="ECO:0000318"/>
    <property type="project" value="GO_Central"/>
</dbReference>
<dbReference type="GO" id="GO:0005886">
    <property type="term" value="C:plasma membrane"/>
    <property type="evidence" value="ECO:0000314"/>
    <property type="project" value="FlyBase"/>
</dbReference>
<dbReference type="GO" id="GO:0030246">
    <property type="term" value="F:carbohydrate binding"/>
    <property type="evidence" value="ECO:0000318"/>
    <property type="project" value="GO_Central"/>
</dbReference>
<dbReference type="GO" id="GO:0097367">
    <property type="term" value="F:carbohydrate derivative binding"/>
    <property type="evidence" value="ECO:0000314"/>
    <property type="project" value="FlyBase"/>
</dbReference>
<dbReference type="GO" id="GO:0005537">
    <property type="term" value="F:D-mannose binding"/>
    <property type="evidence" value="ECO:0000314"/>
    <property type="project" value="FlyBase"/>
</dbReference>
<dbReference type="GO" id="GO:0070061">
    <property type="term" value="F:fructose binding"/>
    <property type="evidence" value="ECO:0000314"/>
    <property type="project" value="FlyBase"/>
</dbReference>
<dbReference type="GO" id="GO:0140081">
    <property type="term" value="F:glycosylated region protein binding"/>
    <property type="evidence" value="ECO:0000250"/>
    <property type="project" value="FlyBase"/>
</dbReference>
<dbReference type="GO" id="GO:0038187">
    <property type="term" value="F:pattern recognition receptor activity"/>
    <property type="evidence" value="ECO:0000318"/>
    <property type="project" value="GO_Central"/>
</dbReference>
<dbReference type="GO" id="GO:0030247">
    <property type="term" value="F:polysaccharide binding"/>
    <property type="evidence" value="ECO:0007669"/>
    <property type="project" value="Ensembl"/>
</dbReference>
<dbReference type="GO" id="GO:0120274">
    <property type="term" value="F:virus coreceptor activity"/>
    <property type="evidence" value="ECO:0000316"/>
    <property type="project" value="FlyBase"/>
</dbReference>
<dbReference type="GO" id="GO:0001618">
    <property type="term" value="F:virus receptor activity"/>
    <property type="evidence" value="ECO:0000314"/>
    <property type="project" value="FlyBase"/>
</dbReference>
<dbReference type="GO" id="GO:0046633">
    <property type="term" value="P:alpha-beta T cell proliferation"/>
    <property type="evidence" value="ECO:0007669"/>
    <property type="project" value="Ensembl"/>
</dbReference>
<dbReference type="GO" id="GO:0033080">
    <property type="term" value="P:immature T cell proliferation in thymus"/>
    <property type="evidence" value="ECO:0007669"/>
    <property type="project" value="Ensembl"/>
</dbReference>
<dbReference type="GO" id="GO:0006955">
    <property type="term" value="P:immune response"/>
    <property type="evidence" value="ECO:0000318"/>
    <property type="project" value="GO_Central"/>
</dbReference>
<dbReference type="GO" id="GO:0046642">
    <property type="term" value="P:negative regulation of alpha-beta T cell proliferation"/>
    <property type="evidence" value="ECO:0007669"/>
    <property type="project" value="Ensembl"/>
</dbReference>
<dbReference type="GO" id="GO:0033088">
    <property type="term" value="P:negative regulation of immature T cell proliferation in thymus"/>
    <property type="evidence" value="ECO:0007669"/>
    <property type="project" value="Ensembl"/>
</dbReference>
<dbReference type="GO" id="GO:0002710">
    <property type="term" value="P:negative regulation of T cell mediated immunity"/>
    <property type="evidence" value="ECO:0007669"/>
    <property type="project" value="Ensembl"/>
</dbReference>
<dbReference type="GO" id="GO:1903902">
    <property type="term" value="P:positive regulation of viral life cycle"/>
    <property type="evidence" value="ECO:0000315"/>
    <property type="project" value="FlyBase"/>
</dbReference>
<dbReference type="GO" id="GO:0046718">
    <property type="term" value="P:symbiont entry into host cell"/>
    <property type="evidence" value="ECO:0000314"/>
    <property type="project" value="FlyBase"/>
</dbReference>
<dbReference type="GO" id="GO:0002456">
    <property type="term" value="P:T cell mediated immunity"/>
    <property type="evidence" value="ECO:0007669"/>
    <property type="project" value="Ensembl"/>
</dbReference>
<dbReference type="FunFam" id="3.10.100.10:FF:000154">
    <property type="entry name" value="C-type lectin domain family 4 member G"/>
    <property type="match status" value="1"/>
</dbReference>
<dbReference type="Gene3D" id="3.10.100.10">
    <property type="entry name" value="Mannose-Binding Protein A, subunit A"/>
    <property type="match status" value="1"/>
</dbReference>
<dbReference type="InterPro" id="IPR001304">
    <property type="entry name" value="C-type_lectin-like"/>
</dbReference>
<dbReference type="InterPro" id="IPR016186">
    <property type="entry name" value="C-type_lectin-like/link_sf"/>
</dbReference>
<dbReference type="InterPro" id="IPR050111">
    <property type="entry name" value="C-type_lectin/snaclec_domain"/>
</dbReference>
<dbReference type="InterPro" id="IPR018378">
    <property type="entry name" value="C-type_lectin_CS"/>
</dbReference>
<dbReference type="InterPro" id="IPR016187">
    <property type="entry name" value="CTDL_fold"/>
</dbReference>
<dbReference type="PANTHER" id="PTHR22803">
    <property type="entry name" value="MANNOSE, PHOSPHOLIPASE, LECTIN RECEPTOR RELATED"/>
    <property type="match status" value="1"/>
</dbReference>
<dbReference type="Pfam" id="PF00059">
    <property type="entry name" value="Lectin_C"/>
    <property type="match status" value="1"/>
</dbReference>
<dbReference type="SMART" id="SM00034">
    <property type="entry name" value="CLECT"/>
    <property type="match status" value="1"/>
</dbReference>
<dbReference type="SUPFAM" id="SSF56436">
    <property type="entry name" value="C-type lectin-like"/>
    <property type="match status" value="1"/>
</dbReference>
<dbReference type="PROSITE" id="PS00615">
    <property type="entry name" value="C_TYPE_LECTIN_1"/>
    <property type="match status" value="1"/>
</dbReference>
<dbReference type="PROSITE" id="PS50041">
    <property type="entry name" value="C_TYPE_LECTIN_2"/>
    <property type="match status" value="1"/>
</dbReference>
<feature type="chain" id="PRO_0000223691" description="C-type lectin domain family 4 member G">
    <location>
        <begin position="1"/>
        <end position="293"/>
    </location>
</feature>
<feature type="topological domain" description="Cytoplasmic" evidence="1">
    <location>
        <begin position="1"/>
        <end position="31"/>
    </location>
</feature>
<feature type="transmembrane region" description="Helical; Signal-anchor for type II membrane protein" evidence="1">
    <location>
        <begin position="32"/>
        <end position="52"/>
    </location>
</feature>
<feature type="topological domain" description="Extracellular" evidence="1">
    <location>
        <begin position="53"/>
        <end position="293"/>
    </location>
</feature>
<feature type="domain" description="C-type lectin" evidence="2">
    <location>
        <begin position="172"/>
        <end position="287"/>
    </location>
</feature>
<feature type="coiled-coil region" evidence="1">
    <location>
        <begin position="96"/>
        <end position="136"/>
    </location>
</feature>
<feature type="modified residue" description="Phosphoserine" evidence="9">
    <location>
        <position position="12"/>
    </location>
</feature>
<feature type="glycosylation site" description="N-linked (GlcNAc...) asparagine" evidence="1">
    <location>
        <position position="73"/>
    </location>
</feature>
<feature type="glycosylation site" description="N-linked (GlcNAc...) asparagine" evidence="1">
    <location>
        <position position="159"/>
    </location>
</feature>
<feature type="disulfide bond" evidence="2">
    <location>
        <begin position="264"/>
        <end position="278"/>
    </location>
</feature>
<gene>
    <name type="primary">CLEC4G</name>
    <name type="ORF">UNQ431/PRO792</name>
</gene>
<protein>
    <recommendedName>
        <fullName>C-type lectin domain family 4 member G</fullName>
    </recommendedName>
    <alternativeName>
        <fullName evidence="8">Liver and lymph node sinusoidal endothelial cell C-type lectin</fullName>
        <shortName evidence="8">LSECtin</shortName>
    </alternativeName>
</protein>
<keyword id="KW-1003">Cell membrane</keyword>
<keyword id="KW-0175">Coiled coil</keyword>
<keyword id="KW-1015">Disulfide bond</keyword>
<keyword id="KW-0325">Glycoprotein</keyword>
<keyword id="KW-1183">Host cell receptor for virus entry</keyword>
<keyword id="KW-0945">Host-virus interaction</keyword>
<keyword id="KW-0430">Lectin</keyword>
<keyword id="KW-0472">Membrane</keyword>
<keyword id="KW-0597">Phosphoprotein</keyword>
<keyword id="KW-1267">Proteomics identification</keyword>
<keyword id="KW-0675">Receptor</keyword>
<keyword id="KW-1185">Reference proteome</keyword>
<keyword id="KW-0735">Signal-anchor</keyword>
<keyword id="KW-0812">Transmembrane</keyword>
<keyword id="KW-1133">Transmembrane helix</keyword>
<accession>Q6UXB4</accession>
<proteinExistence type="evidence at protein level"/>
<sequence length="293" mass="32562">MDTTRYSKWGGSSEEVPGGPWGRWVHWSRRPLFLALAVLVTTVLWAVILSILLSKASTERAALLDGHDLLRTNASKQTAALGALKEEVGDCHSCCSGTQAQLQTTRAELGEAQAKLMEQESALRELRERVTQGLAEAGRGREDVRTELFRALEAVRLQNNSCEPCPTSWLSFEGSCYFFSVPKTTWAAAQDHCADASAHLVIVGGLDEQGFLTRNTRGRGYWLGLRAVRHLGKVQGYQWVDGVSLSFSHWNQGEPNDAWGRENCVMMLHTGLWNDAPCDSEKDGWICEKRHNC</sequence>
<name>CLC4G_HUMAN</name>
<comment type="function">
    <text evidence="3">Binds mannose, N-acetylglucosamine (GlcNAc) and fucose, but not galactose, in a Ca(2+)-dependent manner, in vitro.</text>
</comment>
<comment type="function">
    <text evidence="7">(Microbial infection) Acts as a receptor for Japanese encephalitis virus.</text>
</comment>
<comment type="function">
    <text evidence="4">(Microbial infection) Acts as a receptor for Ebolavirus.</text>
</comment>
<comment type="function">
    <text evidence="4">(Microbial infection) Acts as a receptor for SARS-CoV.</text>
</comment>
<comment type="function">
    <text evidence="5 6">(Microbial infection) Acts as a receptor for Lassa virus and Lymphocytic choriomeningitis virus glycoprotein (PubMed:22156524, PubMed:22673088).</text>
</comment>
<comment type="subunit">
    <text evidence="7">(Microbial infection) Interacts with Japanese encephalitis virus envelope protein E.</text>
</comment>
<comment type="subunit">
    <text evidence="4">(Microbial infection) Interacts with ebolavirus glycoprotein.</text>
</comment>
<comment type="subunit">
    <text evidence="4">(Microbial infection) Interacts with SARS-CoV spike glycoprotein.</text>
</comment>
<comment type="subunit">
    <text evidence="5 6">(Microbial infection) Interacts with lassa virus and Lymphocytic choriomeningitis virus glycoprotein (PubMed:22156524, PubMed:22673088).</text>
</comment>
<comment type="interaction">
    <interactant intactId="EBI-2114729">
        <id>Q6UXB4</id>
    </interactant>
    <interactant intactId="EBI-11343438">
        <id>Q3SXY8</id>
        <label>ARL13B</label>
    </interactant>
    <organismsDiffer>false</organismsDiffer>
    <experiments>3</experiments>
</comment>
<comment type="interaction">
    <interactant intactId="EBI-2114729">
        <id>Q6UXB4</id>
    </interactant>
    <interactant intactId="EBI-18013275">
        <id>Q7Z7G2</id>
        <label>CPLX4</label>
    </interactant>
    <organismsDiffer>false</organismsDiffer>
    <experiments>3</experiments>
</comment>
<comment type="interaction">
    <interactant intactId="EBI-2114729">
        <id>Q6UXB4</id>
    </interactant>
    <interactant intactId="EBI-8787095">
        <id>O00559</id>
        <label>EBAG9</label>
    </interactant>
    <organismsDiffer>false</organismsDiffer>
    <experiments>3</experiments>
</comment>
<comment type="interaction">
    <interactant intactId="EBI-2114729">
        <id>Q6UXB4</id>
    </interactant>
    <interactant intactId="EBI-354047">
        <id>Q13347</id>
        <label>EIF3I</label>
    </interactant>
    <organismsDiffer>false</organismsDiffer>
    <experiments>3</experiments>
</comment>
<comment type="interaction">
    <interactant intactId="EBI-2114729">
        <id>Q6UXB4</id>
    </interactant>
    <interactant intactId="EBI-18304435">
        <id>Q5JX71</id>
        <label>FAM209A</label>
    </interactant>
    <organismsDiffer>false</organismsDiffer>
    <experiments>3</experiments>
</comment>
<comment type="interaction">
    <interactant intactId="EBI-2114729">
        <id>Q6UXB4</id>
    </interactant>
    <interactant intactId="EBI-2115067">
        <id>P80217</id>
        <label>IFI35</label>
    </interactant>
    <organismsDiffer>false</organismsDiffer>
    <experiments>4</experiments>
</comment>
<comment type="interaction">
    <interactant intactId="EBI-2114729">
        <id>Q6UXB4</id>
    </interactant>
    <interactant intactId="EBI-3925442">
        <id>Q9HCJ2</id>
        <label>LRRC4C</label>
    </interactant>
    <organismsDiffer>false</organismsDiffer>
    <experiments>3</experiments>
</comment>
<comment type="interaction">
    <interactant intactId="EBI-2114729">
        <id>Q6UXB4</id>
    </interactant>
    <interactant intactId="EBI-359260">
        <id>P42345</id>
        <label>MTOR</label>
    </interactant>
    <organismsDiffer>false</organismsDiffer>
    <experiments>4</experiments>
</comment>
<comment type="interaction">
    <interactant intactId="EBI-2114729">
        <id>Q6UXB4</id>
    </interactant>
    <interactant intactId="EBI-1220572">
        <id>P54829</id>
        <label>PTPN5</label>
    </interactant>
    <organismsDiffer>false</organismsDiffer>
    <experiments>3</experiments>
</comment>
<comment type="interaction">
    <interactant intactId="EBI-2114729">
        <id>Q6UXB4</id>
    </interactant>
    <interactant intactId="EBI-17640454">
        <id>Q96PQ1</id>
        <label>SIGLEC12</label>
    </interactant>
    <organismsDiffer>false</organismsDiffer>
    <experiments>3</experiments>
</comment>
<comment type="subcellular location">
    <subcellularLocation>
        <location>Cell membrane</location>
        <topology evidence="3">Single-pass type II membrane protein</topology>
    </subcellularLocation>
</comment>
<comment type="tissue specificity">
    <text evidence="3">Expressed exclusively in fetal and adult liver and in lymph nodes. Specifically expressed by endothelial cells lining lymph node and liver sinuses (at protein level).</text>
</comment>
<comment type="online information" name="Functional Glycomics Gateway - Glycan Binding">
    <link uri="http://www.functionalglycomics.org/glycomics/GBPServlet?&amp;operationType=view&amp;cbpId=cbp_hum_Ctlect_416"/>
    <text>LSECtin</text>
</comment>